<sequence>MSFRGRGGFNRGGGGGRGGGGFGGRGGGRGGYGQGGGRGGFGRGGGRGGFNRGGYDQGPPESVVEVGEFMHPCEDDVVCKCITQENRVPYFNAPIYLENKEQIGKVDEIFGQLRDFYFSIKLSENMKASSFKKLQKFYIDPAKLLPLQRFLPRPPGEKGPPRGGGRGGGRGGGRGRGGGRGGGGGFRGGRGGGFGGGGGFRGSRGGGFRGGRGFRGGR</sequence>
<dbReference type="EMBL" id="BC086493">
    <property type="protein sequence ID" value="AAH86493.1"/>
    <property type="molecule type" value="mRNA"/>
</dbReference>
<dbReference type="RefSeq" id="NP_001011252.1">
    <property type="nucleotide sequence ID" value="NM_001011252.1"/>
</dbReference>
<dbReference type="SMR" id="Q5RJV1"/>
<dbReference type="FunCoup" id="Q5RJV1">
    <property type="interactions" value="1923"/>
</dbReference>
<dbReference type="STRING" id="8364.ENSXETP00000034127"/>
<dbReference type="PaxDb" id="8364-ENSXETP00000052038"/>
<dbReference type="DNASU" id="496698"/>
<dbReference type="GeneID" id="496698"/>
<dbReference type="KEGG" id="xtr:496698"/>
<dbReference type="AGR" id="Xenbase:XB-GENE-6258514"/>
<dbReference type="CTD" id="54433"/>
<dbReference type="Xenbase" id="XB-GENE-6258514">
    <property type="gene designation" value="gar1"/>
</dbReference>
<dbReference type="eggNOG" id="KOG3262">
    <property type="taxonomic scope" value="Eukaryota"/>
</dbReference>
<dbReference type="HOGENOM" id="CLU_080002_0_1_1"/>
<dbReference type="InParanoid" id="Q5RJV1"/>
<dbReference type="OMA" id="KPQDGIV"/>
<dbReference type="OrthoDB" id="2187159at2759"/>
<dbReference type="Proteomes" id="UP000008143">
    <property type="component" value="Chromosome 1"/>
</dbReference>
<dbReference type="GO" id="GO:0005730">
    <property type="term" value="C:nucleolus"/>
    <property type="evidence" value="ECO:0007669"/>
    <property type="project" value="UniProtKB-SubCell"/>
</dbReference>
<dbReference type="GO" id="GO:0005697">
    <property type="term" value="C:telomerase holoenzyme complex"/>
    <property type="evidence" value="ECO:0000250"/>
    <property type="project" value="UniProtKB"/>
</dbReference>
<dbReference type="GO" id="GO:0003723">
    <property type="term" value="F:RNA binding"/>
    <property type="evidence" value="ECO:0007669"/>
    <property type="project" value="UniProtKB-KW"/>
</dbReference>
<dbReference type="GO" id="GO:0001522">
    <property type="term" value="P:pseudouridine synthesis"/>
    <property type="evidence" value="ECO:0007669"/>
    <property type="project" value="InterPro"/>
</dbReference>
<dbReference type="GO" id="GO:0006364">
    <property type="term" value="P:rRNA processing"/>
    <property type="evidence" value="ECO:0007669"/>
    <property type="project" value="UniProtKB-KW"/>
</dbReference>
<dbReference type="GO" id="GO:0007004">
    <property type="term" value="P:telomere maintenance via telomerase"/>
    <property type="evidence" value="ECO:0000250"/>
    <property type="project" value="UniProtKB"/>
</dbReference>
<dbReference type="FunFam" id="2.40.10.230:FF:000001">
    <property type="entry name" value="H/ACA ribonucleoprotein complex subunit"/>
    <property type="match status" value="1"/>
</dbReference>
<dbReference type="Gene3D" id="2.40.10.230">
    <property type="entry name" value="Probable tRNA pseudouridine synthase domain"/>
    <property type="match status" value="1"/>
</dbReference>
<dbReference type="InterPro" id="IPR038664">
    <property type="entry name" value="Gar1/Naf1_Cbf5-bd_sf"/>
</dbReference>
<dbReference type="InterPro" id="IPR007504">
    <property type="entry name" value="H/ACA_rnp_Gar1/Naf1"/>
</dbReference>
<dbReference type="InterPro" id="IPR009000">
    <property type="entry name" value="Transl_B-barrel_sf"/>
</dbReference>
<dbReference type="PANTHER" id="PTHR23237:SF6">
    <property type="entry name" value="H_ACA RIBONUCLEOPROTEIN COMPLEX SUBUNIT 1"/>
    <property type="match status" value="1"/>
</dbReference>
<dbReference type="PANTHER" id="PTHR23237">
    <property type="entry name" value="NUCLEOLAR PROTEIN FAMILY A MEMBER 1 SNORNP PROTEIN GAR1"/>
    <property type="match status" value="1"/>
</dbReference>
<dbReference type="Pfam" id="PF04410">
    <property type="entry name" value="Gar1"/>
    <property type="match status" value="1"/>
</dbReference>
<dbReference type="SUPFAM" id="SSF50447">
    <property type="entry name" value="Translation proteins"/>
    <property type="match status" value="1"/>
</dbReference>
<comment type="function">
    <text evidence="1">Required for ribosome biogenesis. Part of a complex which catalyzes pseudouridylation of rRNA. This involves the isomerization of uridine such that the ribose is subsequently attached to C5, instead of the normal N1. Pseudouridine ('psi') residues may serve to stabilize the conformation of rRNAs (By similarity).</text>
</comment>
<comment type="subunit">
    <text evidence="2">Component of the small nucleolar ribonucleoprotein particle containing H/ACA-type snoRNAs (H/ACA snoRNPs). Component of the telomerase holoenzyme complex.</text>
</comment>
<comment type="subcellular location">
    <subcellularLocation>
        <location evidence="1">Nucleus</location>
        <location evidence="1">Nucleolus</location>
    </subcellularLocation>
</comment>
<comment type="similarity">
    <text evidence="4">Belongs to the GAR1 family.</text>
</comment>
<organism>
    <name type="scientific">Xenopus tropicalis</name>
    <name type="common">Western clawed frog</name>
    <name type="synonym">Silurana tropicalis</name>
    <dbReference type="NCBI Taxonomy" id="8364"/>
    <lineage>
        <taxon>Eukaryota</taxon>
        <taxon>Metazoa</taxon>
        <taxon>Chordata</taxon>
        <taxon>Craniata</taxon>
        <taxon>Vertebrata</taxon>
        <taxon>Euteleostomi</taxon>
        <taxon>Amphibia</taxon>
        <taxon>Batrachia</taxon>
        <taxon>Anura</taxon>
        <taxon>Pipoidea</taxon>
        <taxon>Pipidae</taxon>
        <taxon>Xenopodinae</taxon>
        <taxon>Xenopus</taxon>
        <taxon>Silurana</taxon>
    </lineage>
</organism>
<accession>Q5RJV1</accession>
<keyword id="KW-0539">Nucleus</keyword>
<keyword id="KW-1185">Reference proteome</keyword>
<keyword id="KW-0677">Repeat</keyword>
<keyword id="KW-0687">Ribonucleoprotein</keyword>
<keyword id="KW-0690">Ribosome biogenesis</keyword>
<keyword id="KW-0694">RNA-binding</keyword>
<keyword id="KW-0698">rRNA processing</keyword>
<feature type="chain" id="PRO_0000208556" description="H/ACA ribonucleoprotein complex subunit 1">
    <location>
        <begin position="1"/>
        <end position="218"/>
    </location>
</feature>
<feature type="region of interest" description="Disordered" evidence="3">
    <location>
        <begin position="1"/>
        <end position="57"/>
    </location>
</feature>
<feature type="region of interest" description="RGG-box 1">
    <location>
        <begin position="4"/>
        <end position="49"/>
    </location>
</feature>
<feature type="region of interest" description="Disordered" evidence="3">
    <location>
        <begin position="149"/>
        <end position="218"/>
    </location>
</feature>
<feature type="region of interest" description="RGG-box 2">
    <location>
        <begin position="162"/>
        <end position="214"/>
    </location>
</feature>
<feature type="compositionally biased region" description="Gly residues" evidence="3">
    <location>
        <begin position="1"/>
        <end position="56"/>
    </location>
</feature>
<feature type="compositionally biased region" description="Gly residues" evidence="3">
    <location>
        <begin position="161"/>
        <end position="218"/>
    </location>
</feature>
<evidence type="ECO:0000250" key="1"/>
<evidence type="ECO:0000250" key="2">
    <source>
        <dbReference type="UniProtKB" id="Q9NY12"/>
    </source>
</evidence>
<evidence type="ECO:0000256" key="3">
    <source>
        <dbReference type="SAM" id="MobiDB-lite"/>
    </source>
</evidence>
<evidence type="ECO:0000305" key="4"/>
<name>GAR1_XENTR</name>
<reference key="1">
    <citation type="submission" date="2004-11" db="EMBL/GenBank/DDBJ databases">
        <authorList>
            <consortium name="NIH - Xenopus Gene Collection (XGC) project"/>
        </authorList>
    </citation>
    <scope>NUCLEOTIDE SEQUENCE [LARGE SCALE MRNA]</scope>
    <source>
        <tissue>Embryo</tissue>
    </source>
</reference>
<gene>
    <name type="primary">gar1</name>
    <name type="synonym">nola1</name>
</gene>
<proteinExistence type="evidence at transcript level"/>
<protein>
    <recommendedName>
        <fullName>H/ACA ribonucleoprotein complex subunit 1</fullName>
    </recommendedName>
    <alternativeName>
        <fullName>Nucleolar protein family A member 1</fullName>
    </alternativeName>
    <alternativeName>
        <fullName>snoRNP protein GAR1</fullName>
    </alternativeName>
</protein>